<reference key="1">
    <citation type="journal article" date="2005" name="Science">
        <title>The transcriptional landscape of the mammalian genome.</title>
        <authorList>
            <person name="Carninci P."/>
            <person name="Kasukawa T."/>
            <person name="Katayama S."/>
            <person name="Gough J."/>
            <person name="Frith M.C."/>
            <person name="Maeda N."/>
            <person name="Oyama R."/>
            <person name="Ravasi T."/>
            <person name="Lenhard B."/>
            <person name="Wells C."/>
            <person name="Kodzius R."/>
            <person name="Shimokawa K."/>
            <person name="Bajic V.B."/>
            <person name="Brenner S.E."/>
            <person name="Batalov S."/>
            <person name="Forrest A.R."/>
            <person name="Zavolan M."/>
            <person name="Davis M.J."/>
            <person name="Wilming L.G."/>
            <person name="Aidinis V."/>
            <person name="Allen J.E."/>
            <person name="Ambesi-Impiombato A."/>
            <person name="Apweiler R."/>
            <person name="Aturaliya R.N."/>
            <person name="Bailey T.L."/>
            <person name="Bansal M."/>
            <person name="Baxter L."/>
            <person name="Beisel K.W."/>
            <person name="Bersano T."/>
            <person name="Bono H."/>
            <person name="Chalk A.M."/>
            <person name="Chiu K.P."/>
            <person name="Choudhary V."/>
            <person name="Christoffels A."/>
            <person name="Clutterbuck D.R."/>
            <person name="Crowe M.L."/>
            <person name="Dalla E."/>
            <person name="Dalrymple B.P."/>
            <person name="de Bono B."/>
            <person name="Della Gatta G."/>
            <person name="di Bernardo D."/>
            <person name="Down T."/>
            <person name="Engstrom P."/>
            <person name="Fagiolini M."/>
            <person name="Faulkner G."/>
            <person name="Fletcher C.F."/>
            <person name="Fukushima T."/>
            <person name="Furuno M."/>
            <person name="Futaki S."/>
            <person name="Gariboldi M."/>
            <person name="Georgii-Hemming P."/>
            <person name="Gingeras T.R."/>
            <person name="Gojobori T."/>
            <person name="Green R.E."/>
            <person name="Gustincich S."/>
            <person name="Harbers M."/>
            <person name="Hayashi Y."/>
            <person name="Hensch T.K."/>
            <person name="Hirokawa N."/>
            <person name="Hill D."/>
            <person name="Huminiecki L."/>
            <person name="Iacono M."/>
            <person name="Ikeo K."/>
            <person name="Iwama A."/>
            <person name="Ishikawa T."/>
            <person name="Jakt M."/>
            <person name="Kanapin A."/>
            <person name="Katoh M."/>
            <person name="Kawasawa Y."/>
            <person name="Kelso J."/>
            <person name="Kitamura H."/>
            <person name="Kitano H."/>
            <person name="Kollias G."/>
            <person name="Krishnan S.P."/>
            <person name="Kruger A."/>
            <person name="Kummerfeld S.K."/>
            <person name="Kurochkin I.V."/>
            <person name="Lareau L.F."/>
            <person name="Lazarevic D."/>
            <person name="Lipovich L."/>
            <person name="Liu J."/>
            <person name="Liuni S."/>
            <person name="McWilliam S."/>
            <person name="Madan Babu M."/>
            <person name="Madera M."/>
            <person name="Marchionni L."/>
            <person name="Matsuda H."/>
            <person name="Matsuzawa S."/>
            <person name="Miki H."/>
            <person name="Mignone F."/>
            <person name="Miyake S."/>
            <person name="Morris K."/>
            <person name="Mottagui-Tabar S."/>
            <person name="Mulder N."/>
            <person name="Nakano N."/>
            <person name="Nakauchi H."/>
            <person name="Ng P."/>
            <person name="Nilsson R."/>
            <person name="Nishiguchi S."/>
            <person name="Nishikawa S."/>
            <person name="Nori F."/>
            <person name="Ohara O."/>
            <person name="Okazaki Y."/>
            <person name="Orlando V."/>
            <person name="Pang K.C."/>
            <person name="Pavan W.J."/>
            <person name="Pavesi G."/>
            <person name="Pesole G."/>
            <person name="Petrovsky N."/>
            <person name="Piazza S."/>
            <person name="Reed J."/>
            <person name="Reid J.F."/>
            <person name="Ring B.Z."/>
            <person name="Ringwald M."/>
            <person name="Rost B."/>
            <person name="Ruan Y."/>
            <person name="Salzberg S.L."/>
            <person name="Sandelin A."/>
            <person name="Schneider C."/>
            <person name="Schoenbach C."/>
            <person name="Sekiguchi K."/>
            <person name="Semple C.A."/>
            <person name="Seno S."/>
            <person name="Sessa L."/>
            <person name="Sheng Y."/>
            <person name="Shibata Y."/>
            <person name="Shimada H."/>
            <person name="Shimada K."/>
            <person name="Silva D."/>
            <person name="Sinclair B."/>
            <person name="Sperling S."/>
            <person name="Stupka E."/>
            <person name="Sugiura K."/>
            <person name="Sultana R."/>
            <person name="Takenaka Y."/>
            <person name="Taki K."/>
            <person name="Tammoja K."/>
            <person name="Tan S.L."/>
            <person name="Tang S."/>
            <person name="Taylor M.S."/>
            <person name="Tegner J."/>
            <person name="Teichmann S.A."/>
            <person name="Ueda H.R."/>
            <person name="van Nimwegen E."/>
            <person name="Verardo R."/>
            <person name="Wei C.L."/>
            <person name="Yagi K."/>
            <person name="Yamanishi H."/>
            <person name="Zabarovsky E."/>
            <person name="Zhu S."/>
            <person name="Zimmer A."/>
            <person name="Hide W."/>
            <person name="Bult C."/>
            <person name="Grimmond S.M."/>
            <person name="Teasdale R.D."/>
            <person name="Liu E.T."/>
            <person name="Brusic V."/>
            <person name="Quackenbush J."/>
            <person name="Wahlestedt C."/>
            <person name="Mattick J.S."/>
            <person name="Hume D.A."/>
            <person name="Kai C."/>
            <person name="Sasaki D."/>
            <person name="Tomaru Y."/>
            <person name="Fukuda S."/>
            <person name="Kanamori-Katayama M."/>
            <person name="Suzuki M."/>
            <person name="Aoki J."/>
            <person name="Arakawa T."/>
            <person name="Iida J."/>
            <person name="Imamura K."/>
            <person name="Itoh M."/>
            <person name="Kato T."/>
            <person name="Kawaji H."/>
            <person name="Kawagashira N."/>
            <person name="Kawashima T."/>
            <person name="Kojima M."/>
            <person name="Kondo S."/>
            <person name="Konno H."/>
            <person name="Nakano K."/>
            <person name="Ninomiya N."/>
            <person name="Nishio T."/>
            <person name="Okada M."/>
            <person name="Plessy C."/>
            <person name="Shibata K."/>
            <person name="Shiraki T."/>
            <person name="Suzuki S."/>
            <person name="Tagami M."/>
            <person name="Waki K."/>
            <person name="Watahiki A."/>
            <person name="Okamura-Oho Y."/>
            <person name="Suzuki H."/>
            <person name="Kawai J."/>
            <person name="Hayashizaki Y."/>
        </authorList>
    </citation>
    <scope>NUCLEOTIDE SEQUENCE [LARGE SCALE MRNA]</scope>
    <source>
        <strain>C57BL/6J</strain>
        <strain>NOD</strain>
        <tissue>Embryo</tissue>
    </source>
</reference>
<reference key="2">
    <citation type="journal article" date="2009" name="PLoS Biol.">
        <title>Lineage-specific biology revealed by a finished genome assembly of the mouse.</title>
        <authorList>
            <person name="Church D.M."/>
            <person name="Goodstadt L."/>
            <person name="Hillier L.W."/>
            <person name="Zody M.C."/>
            <person name="Goldstein S."/>
            <person name="She X."/>
            <person name="Bult C.J."/>
            <person name="Agarwala R."/>
            <person name="Cherry J.L."/>
            <person name="DiCuccio M."/>
            <person name="Hlavina W."/>
            <person name="Kapustin Y."/>
            <person name="Meric P."/>
            <person name="Maglott D."/>
            <person name="Birtle Z."/>
            <person name="Marques A.C."/>
            <person name="Graves T."/>
            <person name="Zhou S."/>
            <person name="Teague B."/>
            <person name="Potamousis K."/>
            <person name="Churas C."/>
            <person name="Place M."/>
            <person name="Herschleb J."/>
            <person name="Runnheim R."/>
            <person name="Forrest D."/>
            <person name="Amos-Landgraf J."/>
            <person name="Schwartz D.C."/>
            <person name="Cheng Z."/>
            <person name="Lindblad-Toh K."/>
            <person name="Eichler E.E."/>
            <person name="Ponting C.P."/>
        </authorList>
    </citation>
    <scope>NUCLEOTIDE SEQUENCE [LARGE SCALE GENOMIC DNA]</scope>
    <source>
        <strain>C57BL/6J</strain>
    </source>
</reference>
<reference key="3">
    <citation type="submission" date="2005-07" db="EMBL/GenBank/DDBJ databases">
        <authorList>
            <person name="Mural R.J."/>
            <person name="Adams M.D."/>
            <person name="Myers E.W."/>
            <person name="Smith H.O."/>
            <person name="Venter J.C."/>
        </authorList>
    </citation>
    <scope>NUCLEOTIDE SEQUENCE [LARGE SCALE GENOMIC DNA]</scope>
</reference>
<reference key="4">
    <citation type="journal article" date="2004" name="Genome Res.">
        <title>The status, quality, and expansion of the NIH full-length cDNA project: the Mammalian Gene Collection (MGC).</title>
        <authorList>
            <consortium name="The MGC Project Team"/>
        </authorList>
    </citation>
    <scope>NUCLEOTIDE SEQUENCE [LARGE SCALE MRNA]</scope>
    <source>
        <strain>C57BL/6J</strain>
        <strain>FVB/N</strain>
        <tissue>Brain</tissue>
        <tissue>Colon</tissue>
    </source>
</reference>
<reference key="5">
    <citation type="journal article" date="2010" name="Cell">
        <title>A tissue-specific atlas of mouse protein phosphorylation and expression.</title>
        <authorList>
            <person name="Huttlin E.L."/>
            <person name="Jedrychowski M.P."/>
            <person name="Elias J.E."/>
            <person name="Goswami T."/>
            <person name="Rad R."/>
            <person name="Beausoleil S.A."/>
            <person name="Villen J."/>
            <person name="Haas W."/>
            <person name="Sowa M.E."/>
            <person name="Gygi S.P."/>
        </authorList>
    </citation>
    <scope>IDENTIFICATION BY MASS SPECTROMETRY [LARGE SCALE ANALYSIS]</scope>
    <source>
        <tissue>Brain</tissue>
    </source>
</reference>
<dbReference type="EMBL" id="AK003282">
    <property type="protein sequence ID" value="BAB22687.1"/>
    <property type="molecule type" value="mRNA"/>
</dbReference>
<dbReference type="EMBL" id="AK012037">
    <property type="protein sequence ID" value="BAB27988.1"/>
    <property type="molecule type" value="mRNA"/>
</dbReference>
<dbReference type="EMBL" id="AK012327">
    <property type="protein sequence ID" value="BAB28164.1"/>
    <property type="molecule type" value="mRNA"/>
</dbReference>
<dbReference type="EMBL" id="AK154758">
    <property type="protein sequence ID" value="BAE32808.1"/>
    <property type="molecule type" value="mRNA"/>
</dbReference>
<dbReference type="EMBL" id="AL450341">
    <property type="status" value="NOT_ANNOTATED_CDS"/>
    <property type="molecule type" value="Genomic_DNA"/>
</dbReference>
<dbReference type="EMBL" id="CH466626">
    <property type="protein sequence ID" value="EDL07387.1"/>
    <property type="molecule type" value="Genomic_DNA"/>
</dbReference>
<dbReference type="EMBL" id="CH466626">
    <property type="protein sequence ID" value="EDL07392.1"/>
    <property type="molecule type" value="Genomic_DNA"/>
</dbReference>
<dbReference type="EMBL" id="CH466626">
    <property type="protein sequence ID" value="EDL07393.1"/>
    <property type="molecule type" value="Genomic_DNA"/>
</dbReference>
<dbReference type="EMBL" id="BC091753">
    <property type="protein sequence ID" value="AAH91753.1"/>
    <property type="molecule type" value="mRNA"/>
</dbReference>
<dbReference type="EMBL" id="BC100439">
    <property type="protein sequence ID" value="AAI00440.1"/>
    <property type="molecule type" value="mRNA"/>
</dbReference>
<dbReference type="EMBL" id="BC058516">
    <property type="protein sequence ID" value="AAH58516.1"/>
    <property type="molecule type" value="mRNA"/>
</dbReference>
<dbReference type="CCDS" id="CCDS17202.1"/>
<dbReference type="RefSeq" id="NP_001343356.1">
    <property type="nucleotide sequence ID" value="NM_001356427.2"/>
</dbReference>
<dbReference type="RefSeq" id="NP_079874.1">
    <property type="nucleotide sequence ID" value="NM_025598.4"/>
</dbReference>
<dbReference type="RefSeq" id="XP_006500766.1">
    <property type="nucleotide sequence ID" value="XM_006500703.2"/>
</dbReference>
<dbReference type="FunCoup" id="Q9CR37">
    <property type="interactions" value="15"/>
</dbReference>
<dbReference type="STRING" id="10090.ENSMUSP00000016488"/>
<dbReference type="PhosphoSitePlus" id="Q9CR37"/>
<dbReference type="PaxDb" id="10090-ENSMUSP00000016488"/>
<dbReference type="PeptideAtlas" id="Q9CR37"/>
<dbReference type="ProteomicsDB" id="291712"/>
<dbReference type="Pumba" id="Q9CR37"/>
<dbReference type="Antibodypedia" id="44524">
    <property type="antibodies" value="20 antibodies from 12 providers"/>
</dbReference>
<dbReference type="Ensembl" id="ENSMUST00000016488.13">
    <property type="protein sequence ID" value="ENSMUSP00000016488.7"/>
    <property type="gene ID" value="ENSMUSG00000016344.15"/>
</dbReference>
<dbReference type="Ensembl" id="ENSMUST00000108841.2">
    <property type="protein sequence ID" value="ENSMUSP00000104469.2"/>
    <property type="gene ID" value="ENSMUSG00000016344.15"/>
</dbReference>
<dbReference type="GeneID" id="66496"/>
<dbReference type="KEGG" id="mmu:66496"/>
<dbReference type="UCSC" id="uc008oli.1">
    <property type="organism name" value="mouse"/>
</dbReference>
<dbReference type="AGR" id="MGI:1913746"/>
<dbReference type="CTD" id="79144"/>
<dbReference type="MGI" id="MGI:1913746">
    <property type="gene designation" value="Ppdpf"/>
</dbReference>
<dbReference type="VEuPathDB" id="HostDB:ENSMUSG00000016344"/>
<dbReference type="eggNOG" id="ENOG502S1KD">
    <property type="taxonomic scope" value="Eukaryota"/>
</dbReference>
<dbReference type="GeneTree" id="ENSGT00390000009113"/>
<dbReference type="HOGENOM" id="CLU_157362_0_0_1"/>
<dbReference type="InParanoid" id="Q9CR37"/>
<dbReference type="OMA" id="DSDHWWT"/>
<dbReference type="OrthoDB" id="9411431at2759"/>
<dbReference type="PhylomeDB" id="Q9CR37"/>
<dbReference type="TreeFam" id="TF333000"/>
<dbReference type="BioGRID-ORCS" id="66496">
    <property type="hits" value="4 hits in 75 CRISPR screens"/>
</dbReference>
<dbReference type="ChiTaRS" id="Ppdpf">
    <property type="organism name" value="mouse"/>
</dbReference>
<dbReference type="PRO" id="PR:Q9CR37"/>
<dbReference type="Proteomes" id="UP000000589">
    <property type="component" value="Chromosome 2"/>
</dbReference>
<dbReference type="RNAct" id="Q9CR37">
    <property type="molecule type" value="protein"/>
</dbReference>
<dbReference type="Bgee" id="ENSMUSG00000016344">
    <property type="expression patterns" value="Expressed in ganglionic eminence and 71 other cell types or tissues"/>
</dbReference>
<dbReference type="GO" id="GO:0030154">
    <property type="term" value="P:cell differentiation"/>
    <property type="evidence" value="ECO:0007669"/>
    <property type="project" value="UniProtKB-KW"/>
</dbReference>
<dbReference type="GO" id="GO:0001889">
    <property type="term" value="P:liver development"/>
    <property type="evidence" value="ECO:0000315"/>
    <property type="project" value="MGI"/>
</dbReference>
<dbReference type="GO" id="GO:0031929">
    <property type="term" value="P:TOR signaling"/>
    <property type="evidence" value="ECO:0000314"/>
    <property type="project" value="MGI"/>
</dbReference>
<dbReference type="GO" id="GO:0038202">
    <property type="term" value="P:TORC1 signaling"/>
    <property type="evidence" value="ECO:0000315"/>
    <property type="project" value="MGI"/>
</dbReference>
<dbReference type="InterPro" id="IPR026754">
    <property type="entry name" value="PPDPF"/>
</dbReference>
<dbReference type="PANTHER" id="PTHR14572">
    <property type="entry name" value="PANCREATIC PROGENITOR CELL DIFFERENTIATION AND PROLIFERATION FACTOR"/>
    <property type="match status" value="1"/>
</dbReference>
<dbReference type="Pfam" id="PF15060">
    <property type="entry name" value="PPDFL"/>
    <property type="match status" value="1"/>
</dbReference>
<dbReference type="PRINTS" id="PR02071">
    <property type="entry name" value="PPDPFACTOR"/>
</dbReference>
<gene>
    <name type="primary">Ppdpf</name>
    <name type="synonym">Exdpf</name>
</gene>
<organism>
    <name type="scientific">Mus musculus</name>
    <name type="common">Mouse</name>
    <dbReference type="NCBI Taxonomy" id="10090"/>
    <lineage>
        <taxon>Eukaryota</taxon>
        <taxon>Metazoa</taxon>
        <taxon>Chordata</taxon>
        <taxon>Craniata</taxon>
        <taxon>Vertebrata</taxon>
        <taxon>Euteleostomi</taxon>
        <taxon>Mammalia</taxon>
        <taxon>Eutheria</taxon>
        <taxon>Euarchontoglires</taxon>
        <taxon>Glires</taxon>
        <taxon>Rodentia</taxon>
        <taxon>Myomorpha</taxon>
        <taxon>Muroidea</taxon>
        <taxon>Muridae</taxon>
        <taxon>Murinae</taxon>
        <taxon>Mus</taxon>
        <taxon>Mus</taxon>
    </lineage>
</organism>
<proteinExistence type="evidence at protein level"/>
<keyword id="KW-0217">Developmental protein</keyword>
<keyword id="KW-0221">Differentiation</keyword>
<keyword id="KW-0597">Phosphoprotein</keyword>
<keyword id="KW-1185">Reference proteome</keyword>
<sequence>MAAIPSSGSLVATHDYYRRRLGSSSSSSSGGSAEYPGDAVLQSPGLPKADPGHWWASFFFGKSTLPFMTTVLESPERSAESPQVSRSPMTCGLTPETMKQQPVIHSGQTNPRDLS</sequence>
<protein>
    <recommendedName>
        <fullName>Pancreatic progenitor cell differentiation and proliferation factor</fullName>
    </recommendedName>
    <alternativeName>
        <fullName>Exocrine differentiation and proliferation factor</fullName>
    </alternativeName>
</protein>
<accession>Q9CR37</accession>
<accession>Q58EU5</accession>
<evidence type="ECO:0000250" key="1"/>
<evidence type="ECO:0000250" key="2">
    <source>
        <dbReference type="UniProtKB" id="Q9H3Y8"/>
    </source>
</evidence>
<evidence type="ECO:0000256" key="3">
    <source>
        <dbReference type="SAM" id="MobiDB-lite"/>
    </source>
</evidence>
<evidence type="ECO:0000305" key="4"/>
<feature type="chain" id="PRO_0000079469" description="Pancreatic progenitor cell differentiation and proliferation factor">
    <location>
        <begin position="1"/>
        <end position="115"/>
    </location>
</feature>
<feature type="region of interest" description="Disordered" evidence="3">
    <location>
        <begin position="21"/>
        <end position="46"/>
    </location>
</feature>
<feature type="region of interest" description="Disordered" evidence="3">
    <location>
        <begin position="73"/>
        <end position="115"/>
    </location>
</feature>
<feature type="compositionally biased region" description="Low complexity" evidence="3">
    <location>
        <begin position="22"/>
        <end position="32"/>
    </location>
</feature>
<feature type="compositionally biased region" description="Polar residues" evidence="3">
    <location>
        <begin position="106"/>
        <end position="115"/>
    </location>
</feature>
<feature type="modified residue" description="Phosphoserine" evidence="2">
    <location>
        <position position="9"/>
    </location>
</feature>
<name>PPDPF_MOUSE</name>
<comment type="function">
    <text evidence="1">Probable regulator of exocrine pancreas development.</text>
</comment>
<comment type="similarity">
    <text evidence="4">Belongs to the PPDPF family.</text>
</comment>